<accession>Q12530</accession>
<accession>D6VYD9</accession>
<protein>
    <recommendedName>
        <fullName>Ribonuclease MRP protein subunit RMP1</fullName>
    </recommendedName>
    <alternativeName>
        <fullName>RNA-processing protein RMP1</fullName>
    </alternativeName>
    <alternativeName>
        <fullName>RNase MRP 23.6 kDa subunit</fullName>
    </alternativeName>
</protein>
<feature type="chain" id="PRO_0000270572" description="Ribonuclease MRP protein subunit RMP1">
    <location>
        <begin position="1"/>
        <end position="201"/>
    </location>
</feature>
<feature type="transmembrane region" description="Helical" evidence="1">
    <location>
        <begin position="86"/>
        <end position="108"/>
    </location>
</feature>
<feature type="mutagenesis site" description="In RMP1-6; temperature-sensitive phenotype. Defective in 5.8S rRNA processing." evidence="4">
    <original>C</original>
    <variation>R</variation>
    <location>
        <position position="103"/>
    </location>
</feature>
<feature type="helix" evidence="8">
    <location>
        <begin position="4"/>
        <end position="25"/>
    </location>
</feature>
<feature type="turn" evidence="8">
    <location>
        <begin position="26"/>
        <end position="28"/>
    </location>
</feature>
<feature type="strand" evidence="9">
    <location>
        <begin position="29"/>
        <end position="31"/>
    </location>
</feature>
<feature type="helix" evidence="8">
    <location>
        <begin position="33"/>
        <end position="57"/>
    </location>
</feature>
<feature type="strand" evidence="9">
    <location>
        <begin position="60"/>
        <end position="62"/>
    </location>
</feature>
<feature type="helix" evidence="8">
    <location>
        <begin position="64"/>
        <end position="78"/>
    </location>
</feature>
<feature type="helix" evidence="8">
    <location>
        <begin position="81"/>
        <end position="95"/>
    </location>
</feature>
<feature type="strand" evidence="8">
    <location>
        <begin position="96"/>
        <end position="98"/>
    </location>
</feature>
<feature type="helix" evidence="8">
    <location>
        <begin position="100"/>
        <end position="130"/>
    </location>
</feature>
<reference evidence="6" key="1">
    <citation type="journal article" date="1997" name="Nature">
        <title>The nucleotide sequence of Saccharomyces cerevisiae chromosome XII.</title>
        <authorList>
            <person name="Johnston M."/>
            <person name="Hillier L.W."/>
            <person name="Riles L."/>
            <person name="Albermann K."/>
            <person name="Andre B."/>
            <person name="Ansorge W."/>
            <person name="Benes V."/>
            <person name="Brueckner M."/>
            <person name="Delius H."/>
            <person name="Dubois E."/>
            <person name="Duesterhoeft A."/>
            <person name="Entian K.-D."/>
            <person name="Floeth M."/>
            <person name="Goffeau A."/>
            <person name="Hebling U."/>
            <person name="Heumann K."/>
            <person name="Heuss-Neitzel D."/>
            <person name="Hilbert H."/>
            <person name="Hilger F."/>
            <person name="Kleine K."/>
            <person name="Koetter P."/>
            <person name="Louis E.J."/>
            <person name="Messenguy F."/>
            <person name="Mewes H.-W."/>
            <person name="Miosga T."/>
            <person name="Moestl D."/>
            <person name="Mueller-Auer S."/>
            <person name="Nentwich U."/>
            <person name="Obermaier B."/>
            <person name="Piravandi E."/>
            <person name="Pohl T.M."/>
            <person name="Portetelle D."/>
            <person name="Purnelle B."/>
            <person name="Rechmann S."/>
            <person name="Rieger M."/>
            <person name="Rinke M."/>
            <person name="Rose M."/>
            <person name="Scharfe M."/>
            <person name="Scherens B."/>
            <person name="Scholler P."/>
            <person name="Schwager C."/>
            <person name="Schwarz S."/>
            <person name="Underwood A.P."/>
            <person name="Urrestarazu L.A."/>
            <person name="Vandenbol M."/>
            <person name="Verhasselt P."/>
            <person name="Vierendeels F."/>
            <person name="Voet M."/>
            <person name="Volckaert G."/>
            <person name="Voss H."/>
            <person name="Wambutt R."/>
            <person name="Wedler E."/>
            <person name="Wedler H."/>
            <person name="Zimmermann F.K."/>
            <person name="Zollner A."/>
            <person name="Hani J."/>
            <person name="Hoheisel J.D."/>
        </authorList>
    </citation>
    <scope>NUCLEOTIDE SEQUENCE [LARGE SCALE GENOMIC DNA]</scope>
    <source>
        <strain>ATCC 204508 / S288c</strain>
    </source>
</reference>
<reference key="2">
    <citation type="journal article" date="2014" name="G3 (Bethesda)">
        <title>The reference genome sequence of Saccharomyces cerevisiae: Then and now.</title>
        <authorList>
            <person name="Engel S.R."/>
            <person name="Dietrich F.S."/>
            <person name="Fisk D.G."/>
            <person name="Binkley G."/>
            <person name="Balakrishnan R."/>
            <person name="Costanzo M.C."/>
            <person name="Dwight S.S."/>
            <person name="Hitz B.C."/>
            <person name="Karra K."/>
            <person name="Nash R.S."/>
            <person name="Weng S."/>
            <person name="Wong E.D."/>
            <person name="Lloyd P."/>
            <person name="Skrzypek M.S."/>
            <person name="Miyasato S.R."/>
            <person name="Simison M."/>
            <person name="Cherry J.M."/>
        </authorList>
    </citation>
    <scope>GENOME REANNOTATION</scope>
    <source>
        <strain>ATCC 204508 / S288c</strain>
    </source>
</reference>
<reference evidence="5" key="3">
    <citation type="journal article" date="2003" name="Nature">
        <title>Global analysis of protein localization in budding yeast.</title>
        <authorList>
            <person name="Huh W.-K."/>
            <person name="Falvo J.V."/>
            <person name="Gerke L.C."/>
            <person name="Carroll A.S."/>
            <person name="Howson R.W."/>
            <person name="Weissman J.S."/>
            <person name="O'Shea E.K."/>
        </authorList>
    </citation>
    <scope>SUBCELLULAR LOCATION [LARGE SCALE ANALYSIS]</scope>
</reference>
<reference evidence="5" key="4">
    <citation type="journal article" date="2003" name="Nature">
        <title>Global analysis of protein expression in yeast.</title>
        <authorList>
            <person name="Ghaemmaghami S."/>
            <person name="Huh W.-K."/>
            <person name="Bower K."/>
            <person name="Howson R.W."/>
            <person name="Belle A."/>
            <person name="Dephoure N."/>
            <person name="O'Shea E.K."/>
            <person name="Weissman J.S."/>
        </authorList>
    </citation>
    <scope>LEVEL OF PROTEIN EXPRESSION [LARGE SCALE ANALYSIS]</scope>
</reference>
<reference evidence="5" key="5">
    <citation type="journal article" date="2005" name="J. Biol. Chem.">
        <title>Characterization and purification of Saccharomyces cerevisiae RNase MRP reveals a new unique protein component.</title>
        <authorList>
            <person name="Salinas K."/>
            <person name="Wierzbicki S."/>
            <person name="Zhou L."/>
            <person name="Schmitt M.E."/>
        </authorList>
    </citation>
    <scope>FUNCTION</scope>
    <scope>IDENTIFICATION IN THE RNASE MRP COMPLEX BY MASS SPECTROMETRY</scope>
    <scope>MUTAGENESIS OF CYS-103</scope>
</reference>
<proteinExistence type="evidence at protein level"/>
<gene>
    <name evidence="7" type="primary">RMP1</name>
    <name type="ordered locus">YLR145W</name>
</gene>
<sequence length="201" mass="23619">MDEMDNVIRSLEQEYRLILLLNHRNKNQHRAASWYGSFNEMKRNCGQIITLFSSRRLQAKRLKDVEWVKLHRLLQRALFRQLKRWYWQFNGVIALGQFVTLGCTLVTLLANVRALYMRLWEINETEFIRCGCLIKNLPRTKAKSVVNDVEELGEIIDEDIGNNVQENELVITSIPKPLTENCKKKKKRKKKNKSAIDGIFG</sequence>
<evidence type="ECO:0000255" key="1"/>
<evidence type="ECO:0000269" key="2">
    <source>
    </source>
</evidence>
<evidence type="ECO:0000269" key="3">
    <source>
    </source>
</evidence>
<evidence type="ECO:0000269" key="4">
    <source>
    </source>
</evidence>
<evidence type="ECO:0000305" key="5"/>
<evidence type="ECO:0000312" key="6">
    <source>
        <dbReference type="EMBL" id="AAB82379.1"/>
    </source>
</evidence>
<evidence type="ECO:0000312" key="7">
    <source>
        <dbReference type="SGD" id="S000004135"/>
    </source>
</evidence>
<evidence type="ECO:0007829" key="8">
    <source>
        <dbReference type="PDB" id="7C79"/>
    </source>
</evidence>
<evidence type="ECO:0007829" key="9">
    <source>
        <dbReference type="PDB" id="7C7A"/>
    </source>
</evidence>
<organism>
    <name type="scientific">Saccharomyces cerevisiae (strain ATCC 204508 / S288c)</name>
    <name type="common">Baker's yeast</name>
    <dbReference type="NCBI Taxonomy" id="559292"/>
    <lineage>
        <taxon>Eukaryota</taxon>
        <taxon>Fungi</taxon>
        <taxon>Dikarya</taxon>
        <taxon>Ascomycota</taxon>
        <taxon>Saccharomycotina</taxon>
        <taxon>Saccharomycetes</taxon>
        <taxon>Saccharomycetales</taxon>
        <taxon>Saccharomycetaceae</taxon>
        <taxon>Saccharomyces</taxon>
    </lineage>
</organism>
<keyword id="KW-0002">3D-structure</keyword>
<keyword id="KW-0963">Cytoplasm</keyword>
<keyword id="KW-0472">Membrane</keyword>
<keyword id="KW-0539">Nucleus</keyword>
<keyword id="KW-1185">Reference proteome</keyword>
<keyword id="KW-0698">rRNA processing</keyword>
<keyword id="KW-0812">Transmembrane</keyword>
<keyword id="KW-1133">Transmembrane helix</keyword>
<comment type="function">
    <text evidence="4">Functions as part of ribonuclease MRP (RNase MRP), which is involved in rRNA processing in mitochondria.</text>
</comment>
<comment type="subunit">
    <text evidence="4">Component of RNase MRP complex which consists of an RNA moiety and at least 10 protein subunits including POP1, POP3, POP4, POP5, POP6, POP7, POP8, RMP1, RPP1 and SNM1, many of which are shared with the RNase P complex.</text>
</comment>
<comment type="subcellular location">
    <subcellularLocation>
        <location evidence="1">Membrane</location>
        <topology evidence="1">Single-pass membrane protein</topology>
    </subcellularLocation>
    <subcellularLocation>
        <location evidence="2">Cytoplasm</location>
    </subcellularLocation>
    <subcellularLocation>
        <location evidence="2">Nucleus</location>
    </subcellularLocation>
</comment>
<comment type="miscellaneous">
    <text evidence="3">Present with 556 molecules/cell in log phase SD medium.</text>
</comment>
<dbReference type="EMBL" id="U53879">
    <property type="protein sequence ID" value="AAB82379.1"/>
    <property type="molecule type" value="Genomic_DNA"/>
</dbReference>
<dbReference type="EMBL" id="Z73317">
    <property type="protein sequence ID" value="CAA97717.1"/>
    <property type="molecule type" value="Genomic_DNA"/>
</dbReference>
<dbReference type="EMBL" id="BK006945">
    <property type="protein sequence ID" value="DAA09455.1"/>
    <property type="molecule type" value="Genomic_DNA"/>
</dbReference>
<dbReference type="PIR" id="S64994">
    <property type="entry name" value="S64994"/>
</dbReference>
<dbReference type="RefSeq" id="NP_013246.1">
    <property type="nucleotide sequence ID" value="NM_001182032.1"/>
</dbReference>
<dbReference type="PDB" id="6W6V">
    <property type="method" value="EM"/>
    <property type="resolution" value="3.00 A"/>
    <property type="chains" value="L=1-201"/>
</dbReference>
<dbReference type="PDB" id="7C79">
    <property type="method" value="EM"/>
    <property type="resolution" value="2.50 A"/>
    <property type="chains" value="L=1-201"/>
</dbReference>
<dbReference type="PDB" id="7C7A">
    <property type="method" value="EM"/>
    <property type="resolution" value="2.80 A"/>
    <property type="chains" value="L=1-201"/>
</dbReference>
<dbReference type="PDBsum" id="6W6V"/>
<dbReference type="PDBsum" id="7C79"/>
<dbReference type="PDBsum" id="7C7A"/>
<dbReference type="EMDB" id="EMD-21564"/>
<dbReference type="EMDB" id="EMD-30296"/>
<dbReference type="EMDB" id="EMD-30297"/>
<dbReference type="SMR" id="Q12530"/>
<dbReference type="BioGRID" id="31414">
    <property type="interactions" value="181"/>
</dbReference>
<dbReference type="ComplexPortal" id="CPX-3284">
    <property type="entry name" value="Nucleolar ribonuclease MRP complex"/>
</dbReference>
<dbReference type="DIP" id="DIP-4813N"/>
<dbReference type="FunCoup" id="Q12530">
    <property type="interactions" value="98"/>
</dbReference>
<dbReference type="IntAct" id="Q12530">
    <property type="interactions" value="10"/>
</dbReference>
<dbReference type="MINT" id="Q12530"/>
<dbReference type="STRING" id="4932.YLR145W"/>
<dbReference type="PaxDb" id="4932-YLR145W"/>
<dbReference type="PeptideAtlas" id="Q12530"/>
<dbReference type="EnsemblFungi" id="YLR145W_mRNA">
    <property type="protein sequence ID" value="YLR145W"/>
    <property type="gene ID" value="YLR145W"/>
</dbReference>
<dbReference type="GeneID" id="850837"/>
<dbReference type="KEGG" id="sce:YLR145W"/>
<dbReference type="AGR" id="SGD:S000004135"/>
<dbReference type="SGD" id="S000004135">
    <property type="gene designation" value="RMP1"/>
</dbReference>
<dbReference type="VEuPathDB" id="FungiDB:YLR145W"/>
<dbReference type="eggNOG" id="ENOG502S2QW">
    <property type="taxonomic scope" value="Eukaryota"/>
</dbReference>
<dbReference type="HOGENOM" id="CLU_031977_1_1_1"/>
<dbReference type="InParanoid" id="Q12530"/>
<dbReference type="OMA" id="VIPRCYI"/>
<dbReference type="OrthoDB" id="5414547at2759"/>
<dbReference type="BioCyc" id="YEAST:G3O-32282-MONOMER"/>
<dbReference type="BioGRID-ORCS" id="850837">
    <property type="hits" value="5 hits in 10 CRISPR screens"/>
</dbReference>
<dbReference type="CD-CODE" id="7CAF9006">
    <property type="entry name" value="Tam body"/>
</dbReference>
<dbReference type="PRO" id="PR:Q12530"/>
<dbReference type="Proteomes" id="UP000002311">
    <property type="component" value="Chromosome XII"/>
</dbReference>
<dbReference type="RNAct" id="Q12530">
    <property type="molecule type" value="protein"/>
</dbReference>
<dbReference type="GO" id="GO:0005737">
    <property type="term" value="C:cytoplasm"/>
    <property type="evidence" value="ECO:0007005"/>
    <property type="project" value="SGD"/>
</dbReference>
<dbReference type="GO" id="GO:0016020">
    <property type="term" value="C:membrane"/>
    <property type="evidence" value="ECO:0007669"/>
    <property type="project" value="UniProtKB-SubCell"/>
</dbReference>
<dbReference type="GO" id="GO:0005730">
    <property type="term" value="C:nucleolus"/>
    <property type="evidence" value="ECO:0007005"/>
    <property type="project" value="SGD"/>
</dbReference>
<dbReference type="GO" id="GO:0005634">
    <property type="term" value="C:nucleus"/>
    <property type="evidence" value="ECO:0007005"/>
    <property type="project" value="SGD"/>
</dbReference>
<dbReference type="GO" id="GO:0000172">
    <property type="term" value="C:ribonuclease MRP complex"/>
    <property type="evidence" value="ECO:0000314"/>
    <property type="project" value="SGD"/>
</dbReference>
<dbReference type="GO" id="GO:0042134">
    <property type="term" value="F:rRNA primary transcript binding"/>
    <property type="evidence" value="ECO:0000314"/>
    <property type="project" value="SGD"/>
</dbReference>
<dbReference type="GO" id="GO:0000460">
    <property type="term" value="P:maturation of 5.8S rRNA"/>
    <property type="evidence" value="ECO:0000314"/>
    <property type="project" value="ComplexPortal"/>
</dbReference>
<dbReference type="GO" id="GO:0000466">
    <property type="term" value="P:maturation of 5.8S rRNA from tricistronic rRNA transcript (SSU-rRNA, 5.8S rRNA, LSU-rRNA)"/>
    <property type="evidence" value="ECO:0000315"/>
    <property type="project" value="SGD"/>
</dbReference>
<dbReference type="GO" id="GO:0000294">
    <property type="term" value="P:nuclear-transcribed mRNA catabolic process, RNase MRP-dependent"/>
    <property type="evidence" value="ECO:0000314"/>
    <property type="project" value="SGD"/>
</dbReference>
<dbReference type="CDD" id="cd22573">
    <property type="entry name" value="RMP1_RBD"/>
    <property type="match status" value="1"/>
</dbReference>
<dbReference type="InterPro" id="IPR047205">
    <property type="entry name" value="RMP1"/>
</dbReference>
<dbReference type="InterPro" id="IPR047204">
    <property type="entry name" value="RMP1_RBD"/>
</dbReference>
<dbReference type="PANTHER" id="PTHR37792">
    <property type="entry name" value="RIBONUCLEASE MRP PROTEIN SUBUNIT RMP1"/>
    <property type="match status" value="1"/>
</dbReference>
<dbReference type="PANTHER" id="PTHR37792:SF1">
    <property type="entry name" value="RIBONUCLEASE MRP PROTEIN SUBUNIT RMP1"/>
    <property type="match status" value="1"/>
</dbReference>
<dbReference type="Pfam" id="PF20945">
    <property type="entry name" value="RMP1"/>
    <property type="match status" value="1"/>
</dbReference>
<name>RMP1_YEAST</name>